<evidence type="ECO:0000255" key="1">
    <source>
        <dbReference type="HAMAP-Rule" id="MF_00503"/>
    </source>
</evidence>
<evidence type="ECO:0000305" key="2"/>
<keyword id="KW-0687">Ribonucleoprotein</keyword>
<keyword id="KW-0689">Ribosomal protein</keyword>
<keyword id="KW-0694">RNA-binding</keyword>
<keyword id="KW-0699">rRNA-binding</keyword>
<dbReference type="EMBL" id="CP000446">
    <property type="protein sequence ID" value="ABI40325.1"/>
    <property type="molecule type" value="Genomic_DNA"/>
</dbReference>
<dbReference type="RefSeq" id="WP_011623996.1">
    <property type="nucleotide sequence ID" value="NC_008321.1"/>
</dbReference>
<dbReference type="SMR" id="Q0HF42"/>
<dbReference type="GeneID" id="94726694"/>
<dbReference type="KEGG" id="she:Shewmr4_3257"/>
<dbReference type="HOGENOM" id="CLU_078938_4_1_6"/>
<dbReference type="GO" id="GO:1990904">
    <property type="term" value="C:ribonucleoprotein complex"/>
    <property type="evidence" value="ECO:0007669"/>
    <property type="project" value="UniProtKB-KW"/>
</dbReference>
<dbReference type="GO" id="GO:0005840">
    <property type="term" value="C:ribosome"/>
    <property type="evidence" value="ECO:0007669"/>
    <property type="project" value="UniProtKB-KW"/>
</dbReference>
<dbReference type="GO" id="GO:0019843">
    <property type="term" value="F:rRNA binding"/>
    <property type="evidence" value="ECO:0007669"/>
    <property type="project" value="UniProtKB-UniRule"/>
</dbReference>
<dbReference type="GO" id="GO:0003735">
    <property type="term" value="F:structural constituent of ribosome"/>
    <property type="evidence" value="ECO:0007669"/>
    <property type="project" value="InterPro"/>
</dbReference>
<dbReference type="GO" id="GO:0006412">
    <property type="term" value="P:translation"/>
    <property type="evidence" value="ECO:0007669"/>
    <property type="project" value="UniProtKB-UniRule"/>
</dbReference>
<dbReference type="FunFam" id="3.10.430.100:FF:000001">
    <property type="entry name" value="50S ribosomal protein L9"/>
    <property type="match status" value="1"/>
</dbReference>
<dbReference type="FunFam" id="3.40.5.10:FF:000001">
    <property type="entry name" value="50S ribosomal protein L9"/>
    <property type="match status" value="1"/>
</dbReference>
<dbReference type="Gene3D" id="3.10.430.100">
    <property type="entry name" value="Ribosomal protein L9, C-terminal domain"/>
    <property type="match status" value="1"/>
</dbReference>
<dbReference type="Gene3D" id="3.40.5.10">
    <property type="entry name" value="Ribosomal protein L9, N-terminal domain"/>
    <property type="match status" value="1"/>
</dbReference>
<dbReference type="HAMAP" id="MF_00503">
    <property type="entry name" value="Ribosomal_bL9"/>
    <property type="match status" value="1"/>
</dbReference>
<dbReference type="InterPro" id="IPR000244">
    <property type="entry name" value="Ribosomal_bL9"/>
</dbReference>
<dbReference type="InterPro" id="IPR009027">
    <property type="entry name" value="Ribosomal_bL9/RNase_H1_N"/>
</dbReference>
<dbReference type="InterPro" id="IPR020594">
    <property type="entry name" value="Ribosomal_bL9_bac/chp"/>
</dbReference>
<dbReference type="InterPro" id="IPR020069">
    <property type="entry name" value="Ribosomal_bL9_C"/>
</dbReference>
<dbReference type="InterPro" id="IPR036791">
    <property type="entry name" value="Ribosomal_bL9_C_sf"/>
</dbReference>
<dbReference type="InterPro" id="IPR020070">
    <property type="entry name" value="Ribosomal_bL9_N"/>
</dbReference>
<dbReference type="InterPro" id="IPR036935">
    <property type="entry name" value="Ribosomal_bL9_N_sf"/>
</dbReference>
<dbReference type="NCBIfam" id="TIGR00158">
    <property type="entry name" value="L9"/>
    <property type="match status" value="1"/>
</dbReference>
<dbReference type="PANTHER" id="PTHR21368">
    <property type="entry name" value="50S RIBOSOMAL PROTEIN L9"/>
    <property type="match status" value="1"/>
</dbReference>
<dbReference type="Pfam" id="PF03948">
    <property type="entry name" value="Ribosomal_L9_C"/>
    <property type="match status" value="1"/>
</dbReference>
<dbReference type="Pfam" id="PF01281">
    <property type="entry name" value="Ribosomal_L9_N"/>
    <property type="match status" value="1"/>
</dbReference>
<dbReference type="SUPFAM" id="SSF55658">
    <property type="entry name" value="L9 N-domain-like"/>
    <property type="match status" value="1"/>
</dbReference>
<dbReference type="SUPFAM" id="SSF55653">
    <property type="entry name" value="Ribosomal protein L9 C-domain"/>
    <property type="match status" value="1"/>
</dbReference>
<dbReference type="PROSITE" id="PS00651">
    <property type="entry name" value="RIBOSOMAL_L9"/>
    <property type="match status" value="1"/>
</dbReference>
<accession>Q0HF42</accession>
<proteinExistence type="inferred from homology"/>
<organism>
    <name type="scientific">Shewanella sp. (strain MR-4)</name>
    <dbReference type="NCBI Taxonomy" id="60480"/>
    <lineage>
        <taxon>Bacteria</taxon>
        <taxon>Pseudomonadati</taxon>
        <taxon>Pseudomonadota</taxon>
        <taxon>Gammaproteobacteria</taxon>
        <taxon>Alteromonadales</taxon>
        <taxon>Shewanellaceae</taxon>
        <taxon>Shewanella</taxon>
    </lineage>
</organism>
<feature type="chain" id="PRO_1000014862" description="Large ribosomal subunit protein bL9">
    <location>
        <begin position="1"/>
        <end position="150"/>
    </location>
</feature>
<gene>
    <name evidence="1" type="primary">rplI</name>
    <name type="ordered locus">Shewmr4_3257</name>
</gene>
<comment type="function">
    <text evidence="1">Binds to the 23S rRNA.</text>
</comment>
<comment type="similarity">
    <text evidence="1">Belongs to the bacterial ribosomal protein bL9 family.</text>
</comment>
<reference key="1">
    <citation type="submission" date="2006-08" db="EMBL/GenBank/DDBJ databases">
        <title>Complete sequence of Shewanella sp. MR-4.</title>
        <authorList>
            <consortium name="US DOE Joint Genome Institute"/>
            <person name="Copeland A."/>
            <person name="Lucas S."/>
            <person name="Lapidus A."/>
            <person name="Barry K."/>
            <person name="Detter J.C."/>
            <person name="Glavina del Rio T."/>
            <person name="Hammon N."/>
            <person name="Israni S."/>
            <person name="Dalin E."/>
            <person name="Tice H."/>
            <person name="Pitluck S."/>
            <person name="Kiss H."/>
            <person name="Brettin T."/>
            <person name="Bruce D."/>
            <person name="Han C."/>
            <person name="Tapia R."/>
            <person name="Gilna P."/>
            <person name="Schmutz J."/>
            <person name="Larimer F."/>
            <person name="Land M."/>
            <person name="Hauser L."/>
            <person name="Kyrpides N."/>
            <person name="Mikhailova N."/>
            <person name="Nealson K."/>
            <person name="Konstantinidis K."/>
            <person name="Klappenbach J."/>
            <person name="Tiedje J."/>
            <person name="Richardson P."/>
        </authorList>
    </citation>
    <scope>NUCLEOTIDE SEQUENCE [LARGE SCALE GENOMIC DNA]</scope>
    <source>
        <strain>MR-4</strain>
    </source>
</reference>
<sequence>MNVILLDKIANLGNLGDQVAVKAGYARNYLLPQGKAVVANESNVKVFEARRAELEAKLAADLAAANQRAEKIAALEAVVIASKAGDEGKLFGSVGTRDIADAVTAAGVELAKAEVRLPLGALRTTGDFEVEVQLHTEVKAVVKVSVVAEA</sequence>
<protein>
    <recommendedName>
        <fullName evidence="1">Large ribosomal subunit protein bL9</fullName>
    </recommendedName>
    <alternativeName>
        <fullName evidence="2">50S ribosomal protein L9</fullName>
    </alternativeName>
</protein>
<name>RL9_SHESM</name>